<organism>
    <name type="scientific">Mokola virus</name>
    <name type="common">MOKV</name>
    <dbReference type="NCBI Taxonomy" id="12538"/>
    <lineage>
        <taxon>Viruses</taxon>
        <taxon>Riboviria</taxon>
        <taxon>Orthornavirae</taxon>
        <taxon>Negarnaviricota</taxon>
        <taxon>Haploviricotina</taxon>
        <taxon>Monjiviricetes</taxon>
        <taxon>Mononegavirales</taxon>
        <taxon>Rhabdoviridae</taxon>
        <taxon>Alpharhabdovirinae</taxon>
        <taxon>Lyssavirus</taxon>
    </lineage>
</organism>
<accession>P0C572</accession>
<dbReference type="EMBL" id="Y09762">
    <property type="status" value="NOT_ANNOTATED_CDS"/>
    <property type="molecule type" value="Genomic_RNA"/>
</dbReference>
<dbReference type="RefSeq" id="YP_142353.1">
    <property type="nucleotide sequence ID" value="NC_006429.1"/>
</dbReference>
<dbReference type="PDB" id="6TMR">
    <property type="method" value="X-ray"/>
    <property type="resolution" value="2.89 A"/>
    <property type="chains" value="A=20-455"/>
</dbReference>
<dbReference type="PDBsum" id="6TMR"/>
<dbReference type="SMR" id="P0C572"/>
<dbReference type="GlyCosmos" id="P0C572">
    <property type="glycosylation" value="2 sites, No reported glycans"/>
</dbReference>
<dbReference type="GeneID" id="3159473"/>
<dbReference type="KEGG" id="vg:3159473"/>
<dbReference type="OrthoDB" id="21147at10239"/>
<dbReference type="Proteomes" id="UP000006826">
    <property type="component" value="Segment"/>
</dbReference>
<dbReference type="GO" id="GO:0016020">
    <property type="term" value="C:membrane"/>
    <property type="evidence" value="ECO:0007669"/>
    <property type="project" value="UniProtKB-KW"/>
</dbReference>
<dbReference type="GO" id="GO:0019031">
    <property type="term" value="C:viral envelope"/>
    <property type="evidence" value="ECO:0007669"/>
    <property type="project" value="UniProtKB-KW"/>
</dbReference>
<dbReference type="GO" id="GO:0055036">
    <property type="term" value="C:virion membrane"/>
    <property type="evidence" value="ECO:0007669"/>
    <property type="project" value="UniProtKB-SubCell"/>
</dbReference>
<dbReference type="Gene3D" id="2.30.29.130">
    <property type="match status" value="1"/>
</dbReference>
<dbReference type="InterPro" id="IPR055448">
    <property type="entry name" value="PH_Rhabdo_glycop"/>
</dbReference>
<dbReference type="InterPro" id="IPR055447">
    <property type="entry name" value="Rhabdo_glycop_CD"/>
</dbReference>
<dbReference type="InterPro" id="IPR001903">
    <property type="entry name" value="Rhabdo_glycop_FD"/>
</dbReference>
<dbReference type="Pfam" id="PF24834">
    <property type="entry name" value="PH_Rhabdo_glycop"/>
    <property type="match status" value="1"/>
</dbReference>
<dbReference type="Pfam" id="PF24833">
    <property type="entry name" value="Rhabdo_glycop_CD"/>
    <property type="match status" value="1"/>
</dbReference>
<dbReference type="Pfam" id="PF00974">
    <property type="entry name" value="Rhabdo_glycop_FD"/>
    <property type="match status" value="1"/>
</dbReference>
<dbReference type="SUPFAM" id="SSF161008">
    <property type="entry name" value="Viral glycoprotein ectodomain-like"/>
    <property type="match status" value="1"/>
</dbReference>
<name>GLYCO_MOKV</name>
<sequence length="522" mass="58902">MNIPCFVVILSLATTHSLGEFPLYTIPEKIEKWTPIDMIHLSCPNNLLSEEEGCNAESSFTYFELKSGYLAHQKVPGFTCTGVVNEAETYTNFVGYVTTTFKRKHFRPTVAACRDAYNWKVSGDPRYEESLHTPYPDSSWLRTVTTTKESLLIISPSIVEMDIYGRTLHSPMFPSGVCSNVYPSVPSCETNHDYTLWLPEDPSLSLVCDIFTSSNGKKAMNGSRICGFKDERGFYRSLKGACKLTLCGRPGIRLFDGTWVSFTKPDVHVWCTPNQLINIHNDRLDEIEHLIVEDIIKKREECLDTLETILMSQSVSFRRLSHFRKLVPGYGKAYTILNGSLMETNVYYKRVDKWADILPSKGCLKVGQQCMEPVKGVLFNGIIKGPDGQILIPEMQSEQLKQHMDLLKAAVFPLRHPLISREAVFKKDGDADDFVDLHMPDVHKSVSDVDLGLPHWGFWMLIGATIVAFVVLVCLLRVCCKRVRRRRSGRATQEIPLSFPSAPVPRAKVVSSWESYKGLPGT</sequence>
<gene>
    <name type="primary">G</name>
</gene>
<reference key="1">
    <citation type="journal article" date="1997" name="J. Gen. Virol.">
        <title>The complete Mokola virus genome sequence: structure of the RNA-dependent RNA polymerase.</title>
        <authorList>
            <person name="Le Mercier P."/>
            <person name="Jacob Y."/>
            <person name="Tordo N."/>
        </authorList>
    </citation>
    <scope>NUCLEOTIDE SEQUENCE [GENOMIC RNA]</scope>
</reference>
<keyword id="KW-0002">3D-structure</keyword>
<keyword id="KW-0325">Glycoprotein</keyword>
<keyword id="KW-0449">Lipoprotein</keyword>
<keyword id="KW-0472">Membrane</keyword>
<keyword id="KW-0564">Palmitate</keyword>
<keyword id="KW-1185">Reference proteome</keyword>
<keyword id="KW-0732">Signal</keyword>
<keyword id="KW-0812">Transmembrane</keyword>
<keyword id="KW-1133">Transmembrane helix</keyword>
<keyword id="KW-0261">Viral envelope protein</keyword>
<keyword id="KW-0946">Virion</keyword>
<organismHost>
    <name type="scientific">Canis lupus familiaris</name>
    <name type="common">Dog</name>
    <name type="synonym">Canis familiaris</name>
    <dbReference type="NCBI Taxonomy" id="9615"/>
</organismHost>
<organismHost>
    <name type="scientific">Chodsigoa caovansunga</name>
    <name type="common">Van Sung's shrew</name>
    <dbReference type="NCBI Taxonomy" id="269271"/>
</organismHost>
<organismHost>
    <name type="scientific">Felis catus</name>
    <name type="common">Cat</name>
    <name type="synonym">Felis silvestris catus</name>
    <dbReference type="NCBI Taxonomy" id="9685"/>
</organismHost>
<organismHost>
    <name type="scientific">Rodentia</name>
    <dbReference type="NCBI Taxonomy" id="9989"/>
</organismHost>
<feature type="signal peptide" evidence="2">
    <location>
        <begin position="1"/>
        <end position="19"/>
    </location>
</feature>
<feature type="chain" id="PRO_0000295797" description="Glycoprotein">
    <location>
        <begin position="20"/>
        <end position="522"/>
    </location>
</feature>
<feature type="topological domain" description="Virion surface" evidence="2">
    <location>
        <begin position="20"/>
        <end position="455"/>
    </location>
</feature>
<feature type="transmembrane region" description="Helical" evidence="2">
    <location>
        <begin position="456"/>
        <end position="476"/>
    </location>
</feature>
<feature type="topological domain" description="Intravirion" evidence="2">
    <location>
        <begin position="477"/>
        <end position="522"/>
    </location>
</feature>
<feature type="lipid moiety-binding region" description="S-palmitoyl cysteine; by host" evidence="1">
    <location>
        <position position="480"/>
    </location>
</feature>
<feature type="glycosylation site" description="N-linked (GlcNAc...) asparagine; by host" evidence="2">
    <location>
        <position position="221"/>
    </location>
</feature>
<feature type="glycosylation site" description="N-linked (GlcNAc...) asparagine; by host" evidence="1">
    <location>
        <position position="338"/>
    </location>
</feature>
<feature type="strand" evidence="4">
    <location>
        <begin position="23"/>
        <end position="28"/>
    </location>
</feature>
<feature type="strand" evidence="4">
    <location>
        <begin position="34"/>
        <end position="36"/>
    </location>
</feature>
<feature type="helix" evidence="4">
    <location>
        <begin position="38"/>
        <end position="40"/>
    </location>
</feature>
<feature type="helix" evidence="4">
    <location>
        <begin position="48"/>
        <end position="50"/>
    </location>
</feature>
<feature type="turn" evidence="4">
    <location>
        <begin position="51"/>
        <end position="53"/>
    </location>
</feature>
<feature type="strand" evidence="4">
    <location>
        <begin position="56"/>
        <end position="65"/>
    </location>
</feature>
<feature type="turn" evidence="4">
    <location>
        <begin position="71"/>
        <end position="73"/>
    </location>
</feature>
<feature type="strand" evidence="4">
    <location>
        <begin position="77"/>
        <end position="91"/>
    </location>
</feature>
<feature type="strand" evidence="4">
    <location>
        <begin position="93"/>
        <end position="95"/>
    </location>
</feature>
<feature type="strand" evidence="4">
    <location>
        <begin position="97"/>
        <end position="106"/>
    </location>
</feature>
<feature type="helix" evidence="4">
    <location>
        <begin position="110"/>
        <end position="121"/>
    </location>
</feature>
<feature type="turn" evidence="4">
    <location>
        <begin position="140"/>
        <end position="142"/>
    </location>
</feature>
<feature type="strand" evidence="4">
    <location>
        <begin position="145"/>
        <end position="149"/>
    </location>
</feature>
<feature type="strand" evidence="4">
    <location>
        <begin position="152"/>
        <end position="156"/>
    </location>
</feature>
<feature type="strand" evidence="4">
    <location>
        <begin position="159"/>
        <end position="162"/>
    </location>
</feature>
<feature type="turn" evidence="4">
    <location>
        <begin position="163"/>
        <end position="166"/>
    </location>
</feature>
<feature type="strand" evidence="4">
    <location>
        <begin position="167"/>
        <end position="169"/>
    </location>
</feature>
<feature type="strand" evidence="4">
    <location>
        <begin position="171"/>
        <end position="173"/>
    </location>
</feature>
<feature type="strand" evidence="4">
    <location>
        <begin position="179"/>
        <end position="181"/>
    </location>
</feature>
<feature type="strand" evidence="4">
    <location>
        <begin position="195"/>
        <end position="201"/>
    </location>
</feature>
<feature type="strand" evidence="4">
    <location>
        <begin position="211"/>
        <end position="221"/>
    </location>
</feature>
<feature type="strand" evidence="4">
    <location>
        <begin position="224"/>
        <end position="229"/>
    </location>
</feature>
<feature type="strand" evidence="4">
    <location>
        <begin position="235"/>
        <end position="237"/>
    </location>
</feature>
<feature type="strand" evidence="4">
    <location>
        <begin position="242"/>
        <end position="246"/>
    </location>
</feature>
<feature type="strand" evidence="4">
    <location>
        <begin position="249"/>
        <end position="253"/>
    </location>
</feature>
<feature type="strand" evidence="4">
    <location>
        <begin position="259"/>
        <end position="261"/>
    </location>
</feature>
<feature type="helix" evidence="4">
    <location>
        <begin position="282"/>
        <end position="311"/>
    </location>
</feature>
<feature type="helix" evidence="4">
    <location>
        <begin position="317"/>
        <end position="323"/>
    </location>
</feature>
<feature type="strand" evidence="4">
    <location>
        <begin position="326"/>
        <end position="337"/>
    </location>
</feature>
<feature type="strand" evidence="4">
    <location>
        <begin position="340"/>
        <end position="351"/>
    </location>
</feature>
<feature type="helix" evidence="4">
    <location>
        <begin position="354"/>
        <end position="356"/>
    </location>
</feature>
<feature type="helix" evidence="4">
    <location>
        <begin position="393"/>
        <end position="396"/>
    </location>
</feature>
<feature type="helix" evidence="4">
    <location>
        <begin position="399"/>
        <end position="409"/>
    </location>
</feature>
<protein>
    <recommendedName>
        <fullName>Glycoprotein</fullName>
    </recommendedName>
</protein>
<evidence type="ECO:0000250" key="1"/>
<evidence type="ECO:0000255" key="2"/>
<evidence type="ECO:0000305" key="3"/>
<evidence type="ECO:0007829" key="4">
    <source>
        <dbReference type="PDB" id="6TMR"/>
    </source>
</evidence>
<comment type="function">
    <text evidence="1">Attaches the virus to host cellular receptor, inducing endocytosis of the virion. In the endosome, the acidic pH induces conformational changes in the glycoprotein trimer, which trigger fusion between virus and cell membrane. There is convincing in vitro evidence that the muscular form of the nicotinic acetylcholine receptor (nAChR), the neuronal cell adhesion molecule (NCAM), and the p75 neurotrophin receptor (p75NTR) bind glycoprotein and thereby facilitate rabies virus entry into cells (By similarity).</text>
</comment>
<comment type="subunit">
    <text evidence="1">Homotrimer. Interacts with matrix protein (By similarity).</text>
</comment>
<comment type="subcellular location">
    <subcellularLocation>
        <location evidence="3">Virion membrane</location>
        <topology evidence="3">Single-pass type I membrane protein</topology>
    </subcellularLocation>
</comment>
<comment type="PTM">
    <text evidence="1">Glycosylated and palmitoylated by host. Glycosylation is crucial for glycoprotein export at the cell surface (By similarity).</text>
</comment>
<comment type="biotechnology">
    <text>Primary surface antigen capable of inducing and reacting with virus-neutralizing antibodies. Almost all human and veterinary vaccines are based on the functional aspects of the G protein.</text>
</comment>
<comment type="miscellaneous">
    <text evidence="1">Arg-352 is highly involved in rabies virus pathogenicity. Its mutation dramatically attenuates the virus (By similarity).</text>
</comment>
<comment type="similarity">
    <text evidence="3">Belongs to the lyssavirus glycoprotein family.</text>
</comment>
<proteinExistence type="evidence at protein level"/>